<evidence type="ECO:0000250" key="1"/>
<evidence type="ECO:0000255" key="2"/>
<evidence type="ECO:0000305" key="3"/>
<sequence>MVKLAFGSVGDSFSVTSIKAYVAEFIATLLFVFAGVGSAIAFGQLTNGGALDPAGLVAIAVAHALALFVGVSVAANTSGGHLNPAVTFGLAVGGHITVLTGLFYWVAQLLGASVACLLLRFVTHGKAIPTHGVSGGTTELEGVVFEIVITFALVYTVYATAADPKKGSLGTIAPIAIGFIVGANILAAGPFSGGSMNPARSFGPAVAAADFAGNWVYWVGPLIGGGLAGLVYGDVFIGGSYQQVADQDYA</sequence>
<keyword id="KW-0472">Membrane</keyword>
<keyword id="KW-1185">Reference proteome</keyword>
<keyword id="KW-0677">Repeat</keyword>
<keyword id="KW-0812">Transmembrane</keyword>
<keyword id="KW-1133">Transmembrane helix</keyword>
<keyword id="KW-0813">Transport</keyword>
<keyword id="KW-0926">Vacuole</keyword>
<name>TIP22_MAIZE</name>
<comment type="function">
    <text evidence="1">Aquaporins facilitate the transport of water and small neutral solutes across cell membranes.</text>
</comment>
<comment type="subcellular location">
    <subcellularLocation>
        <location evidence="1">Vacuole membrane</location>
        <topology evidence="1">Multi-pass membrane protein</topology>
    </subcellularLocation>
    <text>Tonoplast.</text>
</comment>
<comment type="domain">
    <text>Aquaporins contain two tandem repeats each containing three membrane-spanning domains and a pore-forming loop with the signature motif Asn-Pro-Ala (NPA).</text>
</comment>
<comment type="similarity">
    <text evidence="3">Belongs to the MIP/aquaporin (TC 1.A.8) family. TIP (TC 1.A.8.10) subfamily.</text>
</comment>
<feature type="chain" id="PRO_0000286004" description="Aquaporin TIP2-2">
    <location>
        <begin position="1"/>
        <end position="250"/>
    </location>
</feature>
<feature type="transmembrane region" description="Helical; Name=1" evidence="2">
    <location>
        <begin position="22"/>
        <end position="42"/>
    </location>
</feature>
<feature type="transmembrane region" description="Helical; Name=2" evidence="2">
    <location>
        <begin position="54"/>
        <end position="74"/>
    </location>
</feature>
<feature type="transmembrane region" description="Helical; Name=3" evidence="2">
    <location>
        <begin position="97"/>
        <end position="119"/>
    </location>
</feature>
<feature type="transmembrane region" description="Helical; Name=4" evidence="2">
    <location>
        <begin position="142"/>
        <end position="162"/>
    </location>
</feature>
<feature type="transmembrane region" description="Helical; Name=5" evidence="2">
    <location>
        <begin position="169"/>
        <end position="189"/>
    </location>
</feature>
<feature type="transmembrane region" description="Helical; Name=6" evidence="2">
    <location>
        <begin position="218"/>
        <end position="238"/>
    </location>
</feature>
<feature type="short sequence motif" description="NPA 1" evidence="1">
    <location>
        <begin position="83"/>
        <end position="85"/>
    </location>
</feature>
<feature type="short sequence motif" description="NPA 2" evidence="1">
    <location>
        <begin position="197"/>
        <end position="199"/>
    </location>
</feature>
<dbReference type="EMBL" id="AF326502">
    <property type="protein sequence ID" value="AAK26769.1"/>
    <property type="molecule type" value="mRNA"/>
</dbReference>
<dbReference type="RefSeq" id="NP_001105031.1">
    <property type="nucleotide sequence ID" value="NM_001111561.1"/>
</dbReference>
<dbReference type="SMR" id="Q9ATL8"/>
<dbReference type="STRING" id="4577.Q9ATL8"/>
<dbReference type="PaxDb" id="4577-GRMZM2G056908_P01"/>
<dbReference type="GeneID" id="541895"/>
<dbReference type="KEGG" id="zma:541895"/>
<dbReference type="eggNOG" id="KOG0223">
    <property type="taxonomic scope" value="Eukaryota"/>
</dbReference>
<dbReference type="HOGENOM" id="CLU_020019_3_4_1"/>
<dbReference type="InParanoid" id="Q9ATL8"/>
<dbReference type="OMA" id="YMASTFY"/>
<dbReference type="OrthoDB" id="3222at2759"/>
<dbReference type="Proteomes" id="UP000007305">
    <property type="component" value="Unplaced"/>
</dbReference>
<dbReference type="ExpressionAtlas" id="Q9ATL8">
    <property type="expression patterns" value="baseline"/>
</dbReference>
<dbReference type="GO" id="GO:0016020">
    <property type="term" value="C:membrane"/>
    <property type="evidence" value="ECO:0000304"/>
    <property type="project" value="AgBase"/>
</dbReference>
<dbReference type="GO" id="GO:0009705">
    <property type="term" value="C:plant-type vacuole membrane"/>
    <property type="evidence" value="ECO:0000318"/>
    <property type="project" value="GO_Central"/>
</dbReference>
<dbReference type="GO" id="GO:0032586">
    <property type="term" value="C:protein storage vacuole membrane"/>
    <property type="evidence" value="ECO:0000304"/>
    <property type="project" value="AgBase"/>
</dbReference>
<dbReference type="GO" id="GO:0015250">
    <property type="term" value="F:water channel activity"/>
    <property type="evidence" value="ECO:0000318"/>
    <property type="project" value="GO_Central"/>
</dbReference>
<dbReference type="GO" id="GO:0006833">
    <property type="term" value="P:water transport"/>
    <property type="evidence" value="ECO:0000318"/>
    <property type="project" value="GO_Central"/>
</dbReference>
<dbReference type="CDD" id="cd00333">
    <property type="entry name" value="MIP"/>
    <property type="match status" value="1"/>
</dbReference>
<dbReference type="FunFam" id="1.20.1080.10:FF:000002">
    <property type="entry name" value="Probable aquaporin TIP1-1"/>
    <property type="match status" value="1"/>
</dbReference>
<dbReference type="Gene3D" id="1.20.1080.10">
    <property type="entry name" value="Glycerol uptake facilitator protein"/>
    <property type="match status" value="1"/>
</dbReference>
<dbReference type="InterPro" id="IPR023271">
    <property type="entry name" value="Aquaporin-like"/>
</dbReference>
<dbReference type="InterPro" id="IPR034294">
    <property type="entry name" value="Aquaporin_transptr"/>
</dbReference>
<dbReference type="InterPro" id="IPR000425">
    <property type="entry name" value="MIP"/>
</dbReference>
<dbReference type="InterPro" id="IPR022357">
    <property type="entry name" value="MIP_CS"/>
</dbReference>
<dbReference type="NCBIfam" id="TIGR00861">
    <property type="entry name" value="MIP"/>
    <property type="match status" value="1"/>
</dbReference>
<dbReference type="PANTHER" id="PTHR45665:SF37">
    <property type="entry name" value="AQUAPORIN TIP2-3-RELATED"/>
    <property type="match status" value="1"/>
</dbReference>
<dbReference type="PANTHER" id="PTHR45665">
    <property type="entry name" value="AQUAPORIN-8"/>
    <property type="match status" value="1"/>
</dbReference>
<dbReference type="Pfam" id="PF00230">
    <property type="entry name" value="MIP"/>
    <property type="match status" value="1"/>
</dbReference>
<dbReference type="PRINTS" id="PR00783">
    <property type="entry name" value="MINTRINSICP"/>
</dbReference>
<dbReference type="SUPFAM" id="SSF81338">
    <property type="entry name" value="Aquaporin-like"/>
    <property type="match status" value="1"/>
</dbReference>
<dbReference type="PROSITE" id="PS00221">
    <property type="entry name" value="MIP"/>
    <property type="match status" value="1"/>
</dbReference>
<organism>
    <name type="scientific">Zea mays</name>
    <name type="common">Maize</name>
    <dbReference type="NCBI Taxonomy" id="4577"/>
    <lineage>
        <taxon>Eukaryota</taxon>
        <taxon>Viridiplantae</taxon>
        <taxon>Streptophyta</taxon>
        <taxon>Embryophyta</taxon>
        <taxon>Tracheophyta</taxon>
        <taxon>Spermatophyta</taxon>
        <taxon>Magnoliopsida</taxon>
        <taxon>Liliopsida</taxon>
        <taxon>Poales</taxon>
        <taxon>Poaceae</taxon>
        <taxon>PACMAD clade</taxon>
        <taxon>Panicoideae</taxon>
        <taxon>Andropogonodae</taxon>
        <taxon>Andropogoneae</taxon>
        <taxon>Tripsacinae</taxon>
        <taxon>Zea</taxon>
    </lineage>
</organism>
<proteinExistence type="evidence at transcript level"/>
<protein>
    <recommendedName>
        <fullName>Aquaporin TIP2-2</fullName>
    </recommendedName>
    <alternativeName>
        <fullName>Tonoplast intrinsic protein 2-2</fullName>
    </alternativeName>
    <alternativeName>
        <fullName>ZmTIP2-2</fullName>
    </alternativeName>
    <alternativeName>
        <fullName>ZmTIP2;2</fullName>
    </alternativeName>
</protein>
<gene>
    <name type="primary">TIP2-2</name>
</gene>
<accession>Q9ATL8</accession>
<reference key="1">
    <citation type="journal article" date="2001" name="Plant Physiol.">
        <title>Aquaporins constitute a large and highly divergent protein family in maize.</title>
        <authorList>
            <person name="Chaumont F."/>
            <person name="Barrieu F."/>
            <person name="Wojcik E."/>
            <person name="Chrispeels M.J."/>
            <person name="Jung R."/>
        </authorList>
    </citation>
    <scope>NUCLEOTIDE SEQUENCE [MRNA]</scope>
    <scope>GENE FAMILY</scope>
    <scope>NOMENCLATURE</scope>
    <source>
        <strain>cv. B73</strain>
    </source>
</reference>